<sequence length="1648" mass="186907">MDFSIPPTLPLDLQSRLNELIQDYKDENLTRKGYETKRKQLLDKFEISQMRPYTPLRSPNSRKSKHLHRRNTSLASSITSLPNSIDRRHSIYRVTTINSTSANNTPRRRSKRYTASLQSSLPGSSDENGSVKDAVYNPMIPLLPRHTGAENTSSGDSAMTDSLPLILRGRFEHYDGQTAMISINSKGKETFITWDKLYLKAERVAHELNKSHLYKMDKILLWYNKNDVIEFTIALLGCFISGMAAVPVSFETYSLREILEIIKVTNSKFVLISNACHRQLDNLYSSSNHSKVKLVKNDVFQQIKFVKTDDLGTYTKAKKTSPTFDIPNISYIEFTRTPLGRLSGVVMKHNILINQFETMTKILNSRSMPHWKQKSQSIRKPFHKKIMATNSRFVILNSLDPTRSTGLIMGVLFNLFTGNLMISIDSSILQRPGGYENIIDKFRADILLNDQLQLKQVVINYLENPESAFSKKHKIDFSCIKSCLTSCTTIDTDVSEMVVHKWLKNLGCIDAPFCYSPMLTLLDFGGIFISIRDQLGNLENFPIHNSKLRLQNELFINREKLKLNEVECSITAMINSSSSFKDYLKLETFGFPIPDITLCVVNPDTNTLVQDLTVGEIWISSNHITDEFYQMDKVNEFVFKAKLNYSEMFSWAKYEMPTNEKSQAVTEQLDTILNICPANTYFMRTKLMGFVHNGKIYVLSLIEDMFLQNRLIRLPNWAHTSNLLYAKKGNQSAQPKGNTGAESTKAIDISSLSGETSSGYKRVVESHYLQQITETVVRTVNTVFEVAAFELQHHKEEHFLVMVVESSLAKTEEESKNGETTDTTLMKFAETQRNKLETKMNDLTDQIFRILWIFHKIQPMCILVVPRDTLPRRYCSLELANSTVEKKFLNNDLSAQFVKFQFDNVILDFLPHSAYYNESILSEHLSKLRKMALQEEYAMIEPAYRNGGPVKPKLALQCSGVDYRDESVDTRSHTKLTDFKSILEILEWRISNYGNETAFSDGTNTNLVNSSASNDNNVHKKVSWASFGKIVAGFLKKIVGSKIPLKHGDPIIIMCENSVEYVAMIMACLYCNLLVIPLPSVKESVIEEDLKGLVNIIQSYKVKRVFVDAKLHSLLNDNNVVNKCFKKYKSLIPKITVFSKVKTKNALTVSMFKNVLKQKFGAKPGTRIGMTPCVVWVNTEYDVTSNIHVTMTHSSLLNASKIVKETLQLRNNSPLFSICSHTSGLGFMFSCLLGIYTGASTCLFSLTDVLTDPKEFLIGLQNLNVKDLYLKLETLYALLDRASSLIEGFKNKKENINSAKNNTSGSLREDVFKGVRNIMIPFPNRPRIYTIENILKRYSTISLSCTQISYVYQHHFNPLISLRSYLDIPPVDLYLDPFSLREGIIREVNPNDVSAGNYIKIQDSGVVPVCTDVSVVNPETLLPCVDGEFGEIWCCSEANAFDYFVCNSSKNKLYKDPFITEQFKSKMKSEVNNTLSYLRTGDLGFIKNVSCTNSQGEVVNLNLLFVLGSIHESIEILGLTHFVSDLERTVKDVHSDIGSCLIAKAGGLLVCLIRCKERHNPILGNLTTLIVSELLNKHGVILDLCTFVRTKGISPKNSSMIMEVWAKNRASIMQAWFDQKIQIEAQFGINYGENISIYLLSDYEKDNI</sequence>
<accession>Q12275</accession>
<accession>D6W2F4</accession>
<protein>
    <recommendedName>
        <fullName evidence="7">Homeostatic regulator of DAG</fullName>
        <ecNumber evidence="9">6.2.-.-</ecNumber>
    </recommendedName>
    <alternativeName>
        <fullName evidence="8">Changed mutation rate protein 2</fullName>
    </alternativeName>
    <alternativeName>
        <fullName evidence="7">DISCO-interacting protein 2</fullName>
    </alternativeName>
</protein>
<reference key="1">
    <citation type="journal article" date="1997" name="Yeast">
        <title>DNA sequencing and analysis of 130 kb from yeast chromosome XV.</title>
        <authorList>
            <person name="Voss H."/>
            <person name="Benes V."/>
            <person name="Andrade M.A."/>
            <person name="Valencia A."/>
            <person name="Rechmann S."/>
            <person name="Teodoru C."/>
            <person name="Schwager C."/>
            <person name="Paces V."/>
            <person name="Sander C."/>
            <person name="Ansorge W."/>
        </authorList>
    </citation>
    <scope>NUCLEOTIDE SEQUENCE [GENOMIC DNA]</scope>
    <source>
        <strain>ATCC 96604 / S288c / FY1679</strain>
    </source>
</reference>
<reference key="2">
    <citation type="journal article" date="1997" name="Nature">
        <title>The nucleotide sequence of Saccharomyces cerevisiae chromosome XV.</title>
        <authorList>
            <person name="Dujon B."/>
            <person name="Albermann K."/>
            <person name="Aldea M."/>
            <person name="Alexandraki D."/>
            <person name="Ansorge W."/>
            <person name="Arino J."/>
            <person name="Benes V."/>
            <person name="Bohn C."/>
            <person name="Bolotin-Fukuhara M."/>
            <person name="Bordonne R."/>
            <person name="Boyer J."/>
            <person name="Camasses A."/>
            <person name="Casamayor A."/>
            <person name="Casas C."/>
            <person name="Cheret G."/>
            <person name="Cziepluch C."/>
            <person name="Daignan-Fornier B."/>
            <person name="Dang V.-D."/>
            <person name="de Haan M."/>
            <person name="Delius H."/>
            <person name="Durand P."/>
            <person name="Fairhead C."/>
            <person name="Feldmann H."/>
            <person name="Gaillon L."/>
            <person name="Galisson F."/>
            <person name="Gamo F.-J."/>
            <person name="Gancedo C."/>
            <person name="Goffeau A."/>
            <person name="Goulding S.E."/>
            <person name="Grivell L.A."/>
            <person name="Habbig B."/>
            <person name="Hand N.J."/>
            <person name="Hani J."/>
            <person name="Hattenhorst U."/>
            <person name="Hebling U."/>
            <person name="Hernando Y."/>
            <person name="Herrero E."/>
            <person name="Heumann K."/>
            <person name="Hiesel R."/>
            <person name="Hilger F."/>
            <person name="Hofmann B."/>
            <person name="Hollenberg C.P."/>
            <person name="Hughes B."/>
            <person name="Jauniaux J.-C."/>
            <person name="Kalogeropoulos A."/>
            <person name="Katsoulou C."/>
            <person name="Kordes E."/>
            <person name="Lafuente M.J."/>
            <person name="Landt O."/>
            <person name="Louis E.J."/>
            <person name="Maarse A.C."/>
            <person name="Madania A."/>
            <person name="Mannhaupt G."/>
            <person name="Marck C."/>
            <person name="Martin R.P."/>
            <person name="Mewes H.-W."/>
            <person name="Michaux G."/>
            <person name="Paces V."/>
            <person name="Parle-McDermott A.G."/>
            <person name="Pearson B.M."/>
            <person name="Perrin A."/>
            <person name="Pettersson B."/>
            <person name="Poch O."/>
            <person name="Pohl T.M."/>
            <person name="Poirey R."/>
            <person name="Portetelle D."/>
            <person name="Pujol A."/>
            <person name="Purnelle B."/>
            <person name="Ramezani Rad M."/>
            <person name="Rechmann S."/>
            <person name="Schwager C."/>
            <person name="Schweizer M."/>
            <person name="Sor F."/>
            <person name="Sterky F."/>
            <person name="Tarassov I.A."/>
            <person name="Teodoru C."/>
            <person name="Tettelin H."/>
            <person name="Thierry A."/>
            <person name="Tobiasch E."/>
            <person name="Tzermia M."/>
            <person name="Uhlen M."/>
            <person name="Unseld M."/>
            <person name="Valens M."/>
            <person name="Vandenbol M."/>
            <person name="Vetter I."/>
            <person name="Vlcek C."/>
            <person name="Voet M."/>
            <person name="Volckaert G."/>
            <person name="Voss H."/>
            <person name="Wambutt R."/>
            <person name="Wedler H."/>
            <person name="Wiemann S."/>
            <person name="Winsor B."/>
            <person name="Wolfe K.H."/>
            <person name="Zollner A."/>
            <person name="Zumstein E."/>
            <person name="Kleine K."/>
        </authorList>
    </citation>
    <scope>NUCLEOTIDE SEQUENCE [LARGE SCALE GENOMIC DNA]</scope>
    <source>
        <strain>ATCC 204508 / S288c</strain>
    </source>
</reference>
<reference key="3">
    <citation type="journal article" date="2014" name="G3 (Bethesda)">
        <title>The reference genome sequence of Saccharomyces cerevisiae: Then and now.</title>
        <authorList>
            <person name="Engel S.R."/>
            <person name="Dietrich F.S."/>
            <person name="Fisk D.G."/>
            <person name="Binkley G."/>
            <person name="Balakrishnan R."/>
            <person name="Costanzo M.C."/>
            <person name="Dwight S.S."/>
            <person name="Hitz B.C."/>
            <person name="Karra K."/>
            <person name="Nash R.S."/>
            <person name="Weng S."/>
            <person name="Wong E.D."/>
            <person name="Lloyd P."/>
            <person name="Skrzypek M.S."/>
            <person name="Miyasato S.R."/>
            <person name="Simison M."/>
            <person name="Cherry J.M."/>
        </authorList>
    </citation>
    <scope>GENOME REANNOTATION</scope>
    <source>
        <strain>ATCC 204508 / S288c</strain>
    </source>
</reference>
<reference key="4">
    <citation type="journal article" date="2003" name="Nature">
        <title>Global analysis of protein expression in yeast.</title>
        <authorList>
            <person name="Ghaemmaghami S."/>
            <person name="Huh W.-K."/>
            <person name="Bower K."/>
            <person name="Howson R.W."/>
            <person name="Belle A."/>
            <person name="Dephoure N."/>
            <person name="O'Shea E.K."/>
            <person name="Weissman J.S."/>
        </authorList>
    </citation>
    <scope>LEVEL OF PROTEIN EXPRESSION [LARGE SCALE ANALYSIS]</scope>
</reference>
<reference key="5">
    <citation type="journal article" date="2005" name="Mol. Cancer Res.">
        <title>Identification of mitogen-activated protein kinase signaling pathways that confer resistance to endoplasmic reticulum stress in Saccharomyces cerevisiae.</title>
        <authorList>
            <person name="Chen Y."/>
            <person name="Feldman D.E."/>
            <person name="Deng C."/>
            <person name="Brown J.A."/>
            <person name="De Giacomo A.F."/>
            <person name="Gaw A.F."/>
            <person name="Shi G."/>
            <person name="Le Q.T."/>
            <person name="Brown J.M."/>
            <person name="Koong A.C."/>
        </authorList>
    </citation>
    <scope>DISRUPTION PHENOTYPE</scope>
</reference>
<reference key="6">
    <citation type="journal article" date="2007" name="J. Proteome Res.">
        <title>Large-scale phosphorylation analysis of alpha-factor-arrested Saccharomyces cerevisiae.</title>
        <authorList>
            <person name="Li X."/>
            <person name="Gerber S.A."/>
            <person name="Rudner A.D."/>
            <person name="Beausoleil S.A."/>
            <person name="Haas W."/>
            <person name="Villen J."/>
            <person name="Elias J.E."/>
            <person name="Gygi S.P."/>
        </authorList>
    </citation>
    <scope>PHOSPHORYLATION [LARGE SCALE ANALYSIS] AT SER-751</scope>
    <scope>IDENTIFICATION BY MASS SPECTROMETRY [LARGE SCALE ANALYSIS]</scope>
    <source>
        <strain>ADR376</strain>
    </source>
</reference>
<reference key="7">
    <citation type="journal article" date="2008" name="Mol. Cell. Proteomics">
        <title>A multidimensional chromatography technology for in-depth phosphoproteome analysis.</title>
        <authorList>
            <person name="Albuquerque C.P."/>
            <person name="Smolka M.B."/>
            <person name="Payne S.H."/>
            <person name="Bafna V."/>
            <person name="Eng J."/>
            <person name="Zhou H."/>
        </authorList>
    </citation>
    <scope>IDENTIFICATION BY MASS SPECTROMETRY [LARGE SCALE ANALYSIS]</scope>
</reference>
<reference key="8">
    <citation type="journal article" date="2009" name="Science">
        <title>Global analysis of Cdk1 substrate phosphorylation sites provides insights into evolution.</title>
        <authorList>
            <person name="Holt L.J."/>
            <person name="Tuch B.B."/>
            <person name="Villen J."/>
            <person name="Johnson A.D."/>
            <person name="Gygi S.P."/>
            <person name="Morgan D.O."/>
        </authorList>
    </citation>
    <scope>PHOSPHORYLATION [LARGE SCALE ANALYSIS] AT SER-99</scope>
    <scope>IDENTIFICATION BY MASS SPECTROMETRY [LARGE SCALE ANALYSIS]</scope>
</reference>
<reference key="9">
    <citation type="journal article" date="2022" name="Elife">
        <title>DIP2 is a unique regulator of diacylglycerol lipid homeostasis in eukaryotes.</title>
        <authorList>
            <person name="Mondal S."/>
            <person name="Kinatukara P."/>
            <person name="Singh S."/>
            <person name="Shambhavi S."/>
            <person name="Patil G.S."/>
            <person name="Dubey N."/>
            <person name="Singh S.H."/>
            <person name="Pal B."/>
            <person name="Shekar P.C."/>
            <person name="Kamat S.S."/>
            <person name="Sankaranarayanan R."/>
        </authorList>
    </citation>
    <scope>FUNCTION</scope>
    <scope>DISRUPTION PHENOTYPE</scope>
    <scope>DOMAIN</scope>
    <scope>SUBCELLULAR LOCATION</scope>
    <scope>MUTAGENESIS OF ASP-523 AND LEU-687</scope>
</reference>
<organism>
    <name type="scientific">Saccharomyces cerevisiae (strain ATCC 204508 / S288c)</name>
    <name type="common">Baker's yeast</name>
    <dbReference type="NCBI Taxonomy" id="559292"/>
    <lineage>
        <taxon>Eukaryota</taxon>
        <taxon>Fungi</taxon>
        <taxon>Dikarya</taxon>
        <taxon>Ascomycota</taxon>
        <taxon>Saccharomycotina</taxon>
        <taxon>Saccharomycetes</taxon>
        <taxon>Saccharomycetales</taxon>
        <taxon>Saccharomycetaceae</taxon>
        <taxon>Saccharomyces</taxon>
    </lineage>
</organism>
<gene>
    <name evidence="8" type="primary">CRM2</name>
    <name evidence="7" type="synonym">DIP2</name>
    <name type="ordered locus">YOR093C</name>
    <name type="ORF">YOR3170c</name>
</gene>
<evidence type="ECO:0000255" key="1"/>
<evidence type="ECO:0000255" key="2">
    <source>
        <dbReference type="PROSITE-ProRule" id="PRU01260"/>
    </source>
</evidence>
<evidence type="ECO:0000256" key="3">
    <source>
        <dbReference type="SAM" id="MobiDB-lite"/>
    </source>
</evidence>
<evidence type="ECO:0000269" key="4">
    <source>
    </source>
</evidence>
<evidence type="ECO:0000269" key="5">
    <source>
    </source>
</evidence>
<evidence type="ECO:0000269" key="6">
    <source>
    </source>
</evidence>
<evidence type="ECO:0000303" key="7">
    <source>
    </source>
</evidence>
<evidence type="ECO:0000305" key="8"/>
<evidence type="ECO:0000305" key="9">
    <source>
    </source>
</evidence>
<evidence type="ECO:0007744" key="10">
    <source>
    </source>
</evidence>
<evidence type="ECO:0007744" key="11">
    <source>
    </source>
</evidence>
<name>CRM2_YEAST</name>
<proteinExistence type="evidence at protein level"/>
<keyword id="KW-0325">Glycoprotein</keyword>
<keyword id="KW-0436">Ligase</keyword>
<keyword id="KW-0472">Membrane</keyword>
<keyword id="KW-0496">Mitochondrion</keyword>
<keyword id="KW-0597">Phosphoprotein</keyword>
<keyword id="KW-1185">Reference proteome</keyword>
<keyword id="KW-0346">Stress response</keyword>
<keyword id="KW-0812">Transmembrane</keyword>
<keyword id="KW-1133">Transmembrane helix</keyword>
<keyword id="KW-0834">Unfolded protein response</keyword>
<keyword id="KW-0926">Vacuole</keyword>
<dbReference type="EC" id="6.2.-.-" evidence="9"/>
<dbReference type="EMBL" id="X94335">
    <property type="protein sequence ID" value="CAA64015.1"/>
    <property type="molecule type" value="Genomic_DNA"/>
</dbReference>
<dbReference type="EMBL" id="Z75001">
    <property type="protein sequence ID" value="CAA99290.1"/>
    <property type="molecule type" value="Genomic_DNA"/>
</dbReference>
<dbReference type="EMBL" id="BK006948">
    <property type="protein sequence ID" value="DAA10870.1"/>
    <property type="molecule type" value="Genomic_DNA"/>
</dbReference>
<dbReference type="PIR" id="S61654">
    <property type="entry name" value="S61654"/>
</dbReference>
<dbReference type="RefSeq" id="NP_014736.1">
    <property type="nucleotide sequence ID" value="NM_001183512.1"/>
</dbReference>
<dbReference type="SMR" id="Q12275"/>
<dbReference type="BioGRID" id="34491">
    <property type="interactions" value="94"/>
</dbReference>
<dbReference type="DIP" id="DIP-2646N"/>
<dbReference type="FunCoup" id="Q12275">
    <property type="interactions" value="79"/>
</dbReference>
<dbReference type="IntAct" id="Q12275">
    <property type="interactions" value="16"/>
</dbReference>
<dbReference type="MINT" id="Q12275"/>
<dbReference type="STRING" id="4932.YOR093C"/>
<dbReference type="GlyGen" id="Q12275">
    <property type="glycosylation" value="24 sites"/>
</dbReference>
<dbReference type="iPTMnet" id="Q12275"/>
<dbReference type="PaxDb" id="4932-YOR093C"/>
<dbReference type="PeptideAtlas" id="Q12275"/>
<dbReference type="EnsemblFungi" id="YOR093C_mRNA">
    <property type="protein sequence ID" value="YOR093C"/>
    <property type="gene ID" value="YOR093C"/>
</dbReference>
<dbReference type="GeneID" id="854260"/>
<dbReference type="KEGG" id="sce:YOR093C"/>
<dbReference type="AGR" id="SGD:S000005619"/>
<dbReference type="SGD" id="S000005619">
    <property type="gene designation" value="CRM2"/>
</dbReference>
<dbReference type="VEuPathDB" id="FungiDB:YOR093C"/>
<dbReference type="eggNOG" id="KOG3628">
    <property type="taxonomic scope" value="Eukaryota"/>
</dbReference>
<dbReference type="GeneTree" id="ENSGT00950000182997"/>
<dbReference type="HOGENOM" id="CLU_000737_0_0_1"/>
<dbReference type="InParanoid" id="Q12275"/>
<dbReference type="OMA" id="LVWTYWT"/>
<dbReference type="OrthoDB" id="69964at2759"/>
<dbReference type="BioCyc" id="YEAST:G3O-33627-MONOMER"/>
<dbReference type="BioGRID-ORCS" id="854260">
    <property type="hits" value="1 hit in 10 CRISPR screens"/>
</dbReference>
<dbReference type="PRO" id="PR:Q12275"/>
<dbReference type="Proteomes" id="UP000002311">
    <property type="component" value="Chromosome XV"/>
</dbReference>
<dbReference type="RNAct" id="Q12275">
    <property type="molecule type" value="protein"/>
</dbReference>
<dbReference type="GO" id="GO:0005935">
    <property type="term" value="C:cellular bud neck"/>
    <property type="evidence" value="ECO:0007005"/>
    <property type="project" value="SGD"/>
</dbReference>
<dbReference type="GO" id="GO:0005829">
    <property type="term" value="C:cytosol"/>
    <property type="evidence" value="ECO:0007005"/>
    <property type="project" value="SGD"/>
</dbReference>
<dbReference type="GO" id="GO:0031966">
    <property type="term" value="C:mitochondrial membrane"/>
    <property type="evidence" value="ECO:0007669"/>
    <property type="project" value="UniProtKB-SubCell"/>
</dbReference>
<dbReference type="GO" id="GO:0005774">
    <property type="term" value="C:vacuolar membrane"/>
    <property type="evidence" value="ECO:0007669"/>
    <property type="project" value="UniProtKB-SubCell"/>
</dbReference>
<dbReference type="GO" id="GO:1990816">
    <property type="term" value="C:vacuole-mitochondrion membrane contact site"/>
    <property type="evidence" value="ECO:0000314"/>
    <property type="project" value="SGD"/>
</dbReference>
<dbReference type="GO" id="GO:0016874">
    <property type="term" value="F:ligase activity"/>
    <property type="evidence" value="ECO:0007669"/>
    <property type="project" value="UniProtKB-KW"/>
</dbReference>
<dbReference type="GO" id="GO:0046339">
    <property type="term" value="P:diacylglycerol metabolic process"/>
    <property type="evidence" value="ECO:0000315"/>
    <property type="project" value="SGD"/>
</dbReference>
<dbReference type="GO" id="GO:0006970">
    <property type="term" value="P:response to osmotic stress"/>
    <property type="evidence" value="ECO:0000315"/>
    <property type="project" value="SGD"/>
</dbReference>
<dbReference type="GO" id="GO:0006986">
    <property type="term" value="P:response to unfolded protein"/>
    <property type="evidence" value="ECO:0007669"/>
    <property type="project" value="UniProtKB-KW"/>
</dbReference>
<dbReference type="GO" id="GO:0097576">
    <property type="term" value="P:vacuole fusion"/>
    <property type="evidence" value="ECO:0000315"/>
    <property type="project" value="SGD"/>
</dbReference>
<dbReference type="CDD" id="cd05905">
    <property type="entry name" value="Dip2"/>
    <property type="match status" value="1"/>
</dbReference>
<dbReference type="FunFam" id="3.40.50.12780:FF:000052">
    <property type="entry name" value="YOR093C-like protein"/>
    <property type="match status" value="1"/>
</dbReference>
<dbReference type="Gene3D" id="3.30.300.30">
    <property type="match status" value="1"/>
</dbReference>
<dbReference type="Gene3D" id="3.40.50.12780">
    <property type="entry name" value="N-terminal domain of ligase-like"/>
    <property type="match status" value="3"/>
</dbReference>
<dbReference type="InterPro" id="IPR025110">
    <property type="entry name" value="AMP-bd_C"/>
</dbReference>
<dbReference type="InterPro" id="IPR045851">
    <property type="entry name" value="AMP-bd_C_sf"/>
</dbReference>
<dbReference type="InterPro" id="IPR000873">
    <property type="entry name" value="AMP-dep_synth/lig_dom"/>
</dbReference>
<dbReference type="InterPro" id="IPR042099">
    <property type="entry name" value="ANL_N_sf"/>
</dbReference>
<dbReference type="InterPro" id="IPR037337">
    <property type="entry name" value="Dip2-like_dom"/>
</dbReference>
<dbReference type="InterPro" id="IPR010506">
    <property type="entry name" value="DMAP1-bd"/>
</dbReference>
<dbReference type="InterPro" id="IPR056881">
    <property type="entry name" value="Mug62_dom"/>
</dbReference>
<dbReference type="PANTHER" id="PTHR22754:SF32">
    <property type="entry name" value="DISCO-INTERACTING PROTEIN 2"/>
    <property type="match status" value="1"/>
</dbReference>
<dbReference type="PANTHER" id="PTHR22754">
    <property type="entry name" value="DISCO-INTERACTING PROTEIN 2 DIP2 -RELATED"/>
    <property type="match status" value="1"/>
</dbReference>
<dbReference type="Pfam" id="PF00501">
    <property type="entry name" value="AMP-binding"/>
    <property type="match status" value="1"/>
</dbReference>
<dbReference type="Pfam" id="PF23024">
    <property type="entry name" value="AMP-dom_DIP2-like"/>
    <property type="match status" value="1"/>
</dbReference>
<dbReference type="Pfam" id="PF06464">
    <property type="entry name" value="DMAP_binding"/>
    <property type="match status" value="1"/>
</dbReference>
<dbReference type="Pfam" id="PF24919">
    <property type="entry name" value="Mug62"/>
    <property type="match status" value="1"/>
</dbReference>
<dbReference type="SMART" id="SM01137">
    <property type="entry name" value="DMAP_binding"/>
    <property type="match status" value="1"/>
</dbReference>
<dbReference type="SUPFAM" id="SSF56801">
    <property type="entry name" value="Acetyl-CoA synthetase-like"/>
    <property type="match status" value="2"/>
</dbReference>
<dbReference type="PROSITE" id="PS51912">
    <property type="entry name" value="DMAP1_BIND"/>
    <property type="match status" value="1"/>
</dbReference>
<feature type="chain" id="PRO_0000237653" description="Homeostatic regulator of DAG">
    <location>
        <begin position="1"/>
        <end position="1648"/>
    </location>
</feature>
<feature type="transmembrane region" description="Helical" evidence="1">
    <location>
        <begin position="228"/>
        <end position="248"/>
    </location>
</feature>
<feature type="transmembrane region" description="Helical" evidence="1">
    <location>
        <begin position="1061"/>
        <end position="1081"/>
    </location>
</feature>
<feature type="transmembrane region" description="Helical" evidence="1">
    <location>
        <begin position="1224"/>
        <end position="1244"/>
    </location>
</feature>
<feature type="domain" description="DMAP1-binding" evidence="2">
    <location>
        <begin position="5"/>
        <end position="101"/>
    </location>
</feature>
<feature type="region of interest" description="Disordered" evidence="3">
    <location>
        <begin position="52"/>
        <end position="73"/>
    </location>
</feature>
<feature type="region of interest" description="Disordered" evidence="3">
    <location>
        <begin position="96"/>
        <end position="130"/>
    </location>
</feature>
<feature type="region of interest" description="Fatty acyl-AMP ligase-like domain 1" evidence="6">
    <location>
        <begin position="158"/>
        <end position="893"/>
    </location>
</feature>
<feature type="region of interest" description="Fatty acyl-AMP ligase-like domain 2" evidence="6">
    <location>
        <begin position="950"/>
        <end position="1648"/>
    </location>
</feature>
<feature type="compositionally biased region" description="Basic residues" evidence="3">
    <location>
        <begin position="60"/>
        <end position="71"/>
    </location>
</feature>
<feature type="compositionally biased region" description="Polar residues" evidence="3">
    <location>
        <begin position="96"/>
        <end position="105"/>
    </location>
</feature>
<feature type="compositionally biased region" description="Polar residues" evidence="3">
    <location>
        <begin position="113"/>
        <end position="128"/>
    </location>
</feature>
<feature type="modified residue" description="Phosphoserine" evidence="11">
    <location>
        <position position="99"/>
    </location>
</feature>
<feature type="modified residue" description="Phosphoserine" evidence="10">
    <location>
        <position position="751"/>
    </location>
</feature>
<feature type="glycosylation site" description="N-linked (GlcNAc...) asparagine" evidence="1">
    <location>
        <position position="28"/>
    </location>
</feature>
<feature type="glycosylation site" description="N-linked (GlcNAc...) asparagine" evidence="1">
    <location>
        <position position="71"/>
    </location>
</feature>
<feature type="glycosylation site" description="N-linked (GlcNAc...) asparagine" evidence="1">
    <location>
        <position position="98"/>
    </location>
</feature>
<feature type="glycosylation site" description="N-linked (GlcNAc...) asparagine" evidence="1">
    <location>
        <position position="128"/>
    </location>
</feature>
<feature type="glycosylation site" description="N-linked (GlcNAc...) asparagine" evidence="1">
    <location>
        <position position="151"/>
    </location>
</feature>
<feature type="glycosylation site" description="N-linked (GlcNAc...) asparagine" evidence="1">
    <location>
        <position position="209"/>
    </location>
</feature>
<feature type="glycosylation site" description="N-linked (GlcNAc...) asparagine" evidence="1">
    <location>
        <position position="288"/>
    </location>
</feature>
<feature type="glycosylation site" description="N-linked (GlcNAc...) asparagine" evidence="1">
    <location>
        <position position="328"/>
    </location>
</feature>
<feature type="glycosylation site" description="N-linked (GlcNAc...) asparagine" evidence="1">
    <location>
        <position position="575"/>
    </location>
</feature>
<feature type="glycosylation site" description="N-linked (GlcNAc...) asparagine" evidence="1">
    <location>
        <position position="644"/>
    </location>
</feature>
<feature type="glycosylation site" description="N-linked (GlcNAc...) asparagine" evidence="1">
    <location>
        <position position="730"/>
    </location>
</feature>
<feature type="glycosylation site" description="N-linked (GlcNAc...) asparagine" evidence="1">
    <location>
        <position position="881"/>
    </location>
</feature>
<feature type="glycosylation site" description="N-linked (GlcNAc...) asparagine" evidence="1">
    <location>
        <position position="917"/>
    </location>
</feature>
<feature type="glycosylation site" description="N-linked (GlcNAc...) asparagine" evidence="1">
    <location>
        <position position="995"/>
    </location>
</feature>
<feature type="glycosylation site" description="N-linked (GlcNAc...) asparagine" evidence="1">
    <location>
        <position position="1009"/>
    </location>
</feature>
<feature type="glycosylation site" description="N-linked (GlcNAc...) asparagine" evidence="1">
    <location>
        <position position="1198"/>
    </location>
</feature>
<feature type="glycosylation site" description="N-linked (GlcNAc...) asparagine" evidence="1">
    <location>
        <position position="1301"/>
    </location>
</feature>
<feature type="glycosylation site" description="N-linked (GlcNAc...) asparagine" evidence="1">
    <location>
        <position position="1302"/>
    </location>
</feature>
<feature type="glycosylation site" description="N-linked (GlcNAc...) asparagine" evidence="1">
    <location>
        <position position="1447"/>
    </location>
</feature>
<feature type="glycosylation site" description="N-linked (GlcNAc...) asparagine" evidence="1">
    <location>
        <position position="1472"/>
    </location>
</feature>
<feature type="glycosylation site" description="N-linked (GlcNAc...) asparagine" evidence="1">
    <location>
        <position position="1488"/>
    </location>
</feature>
<feature type="glycosylation site" description="N-linked (GlcNAc...) asparagine" evidence="1">
    <location>
        <position position="1565"/>
    </location>
</feature>
<feature type="glycosylation site" description="N-linked (GlcNAc...) asparagine" evidence="1">
    <location>
        <position position="1597"/>
    </location>
</feature>
<feature type="glycosylation site" description="N-linked (GlcNAc...) asparagine" evidence="1">
    <location>
        <position position="1634"/>
    </location>
</feature>
<feature type="mutagenesis site" description="Impairs DAG to TAG conversion." evidence="6">
    <original>D</original>
    <variation>A</variation>
    <location>
        <position position="523"/>
    </location>
</feature>
<feature type="mutagenesis site" description="Impairs DAG to TAG conversion." evidence="6">
    <original>L</original>
    <variation>A</variation>
    <location>
        <position position="687"/>
    </location>
</feature>
<comment type="function">
    <text evidence="6">Homeostatic regulator of a chemically distinct subset of diacylglycerols (DAGs) with C36 chain length that prevents the toxic accumulation of these specific DAGs in the logarithmic growth phase, which otherwise leads to endoplasmic reticulum stress (PubMed:35766356). Maintains the basal level of DAG subspecies by directly facilitating DAG to triacylglycerol (TAG) conversion process, possibly via adenylation activity of its FLD domains (PubMed:35766356). Does not affect the abundant DAG species (representing over 90% of total DAG pool), comprised of C32 and C34 chain lengths (PubMed:35766356). Required for vacuole fusion-mediated osmoadaptation (PubMed:35766356).</text>
</comment>
<comment type="subcellular location">
    <subcellularLocation>
        <location evidence="6">Vacuole membrane</location>
        <topology evidence="1">Multi-pass membrane protein</topology>
    </subcellularLocation>
    <subcellularLocation>
        <location evidence="6">Mitochondrion membrane</location>
        <topology evidence="1">Multi-pass membrane protein</topology>
    </subcellularLocation>
    <text evidence="6">Localizes at mitochondria-vacuole contact sites.</text>
</comment>
<comment type="domain">
    <text evidence="6">The fatty acyl-AMP ligase-like domains (FLDs) are essential for the redirection of the flux of DAG subspecies to storage lipid, triacylglycerols, probably via adenylation activity.</text>
</comment>
<comment type="disruption phenotype">
    <text evidence="5 6">Causes sensitivity to unfolded protein response-inducing agents such as tunicamycin (PubMed:16380504, PubMed:35766356). Results in a significant 23% increase in the total DAG level compared with a moderate depletion in triacylglycerol (TAG) level (PubMed:35766356). Leads to a 19-fold accumulation of C36:0 and 8-fold accumulation of C36:1 chain-length DAG subspecies (PubMed:35766356).</text>
</comment>
<comment type="miscellaneous">
    <text evidence="4">Present with 41 molecules/cell in log phase SD medium.</text>
</comment>